<proteinExistence type="inferred from homology"/>
<gene>
    <name type="primary">ycsN</name>
    <name type="ordered locus">BSU04150</name>
</gene>
<evidence type="ECO:0000250" key="1"/>
<evidence type="ECO:0000305" key="2"/>
<sequence>MQRIQLAEDLQFSRVIHGLWRLNEWNYSDAELLSLIEWCIDHGITTFDHADIYGGYTCEKLFGNALALSPGLRENIELVTKCGIVLESPERPAHRSHHYNTSKSHILASVEQSLMNLRTDYIDMLLIHRPDPLMDPEGVAEAFQALKCSGKVRYFGVSNFKDHQYRMLESYLPEKLVTNQIELSAYELENMLDGTLNLCQEKRIPPMAWSPLAGGKVFTENTDKDRRVRTALESVQGEIGAASLDEVMYAWLYTHPAGIMPIVGSGKRERISAAINALSYKLDQDQWFRIFTAVQGYDIP</sequence>
<feature type="chain" id="PRO_0000070390" description="Uncharacterized oxidoreductase YcsN">
    <location>
        <begin position="1"/>
        <end position="300"/>
    </location>
</feature>
<feature type="active site" description="Proton donor" evidence="1">
    <location>
        <position position="53"/>
    </location>
</feature>
<feature type="binding site" evidence="1">
    <location>
        <begin position="210"/>
        <end position="220"/>
    </location>
    <ligand>
        <name>NADP(+)</name>
        <dbReference type="ChEBI" id="CHEBI:58349"/>
    </ligand>
</feature>
<name>YCSN_BACSU</name>
<organism>
    <name type="scientific">Bacillus subtilis (strain 168)</name>
    <dbReference type="NCBI Taxonomy" id="224308"/>
    <lineage>
        <taxon>Bacteria</taxon>
        <taxon>Bacillati</taxon>
        <taxon>Bacillota</taxon>
        <taxon>Bacilli</taxon>
        <taxon>Bacillales</taxon>
        <taxon>Bacillaceae</taxon>
        <taxon>Bacillus</taxon>
    </lineage>
</organism>
<dbReference type="EC" id="1.-.-.-"/>
<dbReference type="EMBL" id="D38161">
    <property type="protein sequence ID" value="BAA07366.1"/>
    <property type="molecule type" value="Genomic_DNA"/>
</dbReference>
<dbReference type="EMBL" id="D50453">
    <property type="protein sequence ID" value="BAA09044.1"/>
    <property type="molecule type" value="Genomic_DNA"/>
</dbReference>
<dbReference type="EMBL" id="AL009126">
    <property type="protein sequence ID" value="CAB12222.1"/>
    <property type="molecule type" value="Genomic_DNA"/>
</dbReference>
<dbReference type="PIR" id="I39903">
    <property type="entry name" value="I39903"/>
</dbReference>
<dbReference type="RefSeq" id="NP_388296.1">
    <property type="nucleotide sequence ID" value="NC_000964.3"/>
</dbReference>
<dbReference type="RefSeq" id="WP_003246655.1">
    <property type="nucleotide sequence ID" value="NZ_OZ025638.1"/>
</dbReference>
<dbReference type="SMR" id="P42972"/>
<dbReference type="FunCoup" id="P42972">
    <property type="interactions" value="12"/>
</dbReference>
<dbReference type="STRING" id="224308.BSU04150"/>
<dbReference type="PaxDb" id="224308-BSU04150"/>
<dbReference type="EnsemblBacteria" id="CAB12222">
    <property type="protein sequence ID" value="CAB12222"/>
    <property type="gene ID" value="BSU_04150"/>
</dbReference>
<dbReference type="GeneID" id="936168"/>
<dbReference type="KEGG" id="bsu:BSU04150"/>
<dbReference type="PATRIC" id="fig|224308.179.peg.441"/>
<dbReference type="eggNOG" id="COG4989">
    <property type="taxonomic scope" value="Bacteria"/>
</dbReference>
<dbReference type="InParanoid" id="P42972"/>
<dbReference type="OrthoDB" id="9773828at2"/>
<dbReference type="PhylomeDB" id="P42972"/>
<dbReference type="BioCyc" id="BSUB:BSU04150-MONOMER"/>
<dbReference type="Proteomes" id="UP000001570">
    <property type="component" value="Chromosome"/>
</dbReference>
<dbReference type="GO" id="GO:0005829">
    <property type="term" value="C:cytosol"/>
    <property type="evidence" value="ECO:0000318"/>
    <property type="project" value="GO_Central"/>
</dbReference>
<dbReference type="GO" id="GO:0016491">
    <property type="term" value="F:oxidoreductase activity"/>
    <property type="evidence" value="ECO:0007669"/>
    <property type="project" value="UniProtKB-KW"/>
</dbReference>
<dbReference type="CDD" id="cd19092">
    <property type="entry name" value="AKR_BsYcsN_EcYdhF-like"/>
    <property type="match status" value="1"/>
</dbReference>
<dbReference type="FunFam" id="3.20.20.100:FF:000008">
    <property type="entry name" value="Aldo/keto reductase family oxidoreductase"/>
    <property type="match status" value="1"/>
</dbReference>
<dbReference type="Gene3D" id="3.20.20.100">
    <property type="entry name" value="NADP-dependent oxidoreductase domain"/>
    <property type="match status" value="1"/>
</dbReference>
<dbReference type="InterPro" id="IPR020471">
    <property type="entry name" value="AKR"/>
</dbReference>
<dbReference type="InterPro" id="IPR050523">
    <property type="entry name" value="AKR_Detox_Biosynth"/>
</dbReference>
<dbReference type="InterPro" id="IPR023210">
    <property type="entry name" value="NADP_OxRdtase_dom"/>
</dbReference>
<dbReference type="InterPro" id="IPR036812">
    <property type="entry name" value="NADP_OxRdtase_dom_sf"/>
</dbReference>
<dbReference type="PANTHER" id="PTHR43364">
    <property type="entry name" value="NADH-SPECIFIC METHYLGLYOXAL REDUCTASE-RELATED"/>
    <property type="match status" value="1"/>
</dbReference>
<dbReference type="PANTHER" id="PTHR43364:SF1">
    <property type="entry name" value="OXIDOREDUCTASE YDHF"/>
    <property type="match status" value="1"/>
</dbReference>
<dbReference type="Pfam" id="PF00248">
    <property type="entry name" value="Aldo_ket_red"/>
    <property type="match status" value="1"/>
</dbReference>
<dbReference type="PRINTS" id="PR00069">
    <property type="entry name" value="ALDKETRDTASE"/>
</dbReference>
<dbReference type="SUPFAM" id="SSF51430">
    <property type="entry name" value="NAD(P)-linked oxidoreductase"/>
    <property type="match status" value="1"/>
</dbReference>
<keyword id="KW-0521">NADP</keyword>
<keyword id="KW-0560">Oxidoreductase</keyword>
<keyword id="KW-1185">Reference proteome</keyword>
<reference key="1">
    <citation type="journal article" date="1995" name="Microbiology">
        <title>Determination of a 17,484 bp nucleotide sequence around the 39 degrees region of the Bacillus subtilis chromosome and similarity analysis of the products of putative ORFs.</title>
        <authorList>
            <person name="Akagawa E."/>
            <person name="Kurita K."/>
            <person name="Sugawara T."/>
            <person name="Nakamura K."/>
            <person name="Kasahara Y."/>
            <person name="Ogasawara N."/>
            <person name="Yamane K."/>
        </authorList>
    </citation>
    <scope>NUCLEOTIDE SEQUENCE [GENOMIC DNA]</scope>
    <source>
        <strain>168</strain>
    </source>
</reference>
<reference key="2">
    <citation type="journal article" date="1996" name="Microbiology">
        <title>The 25 degrees-36 degrees region of the Bacillus subtilis chromosome: determination of the sequence of a 146 kb segment and identification of 113 genes.</title>
        <authorList>
            <person name="Yamane K."/>
            <person name="Kumano M."/>
            <person name="Kurita K."/>
        </authorList>
    </citation>
    <scope>NUCLEOTIDE SEQUENCE [GENOMIC DNA]</scope>
    <source>
        <strain>168</strain>
    </source>
</reference>
<reference key="3">
    <citation type="journal article" date="1997" name="Nature">
        <title>The complete genome sequence of the Gram-positive bacterium Bacillus subtilis.</title>
        <authorList>
            <person name="Kunst F."/>
            <person name="Ogasawara N."/>
            <person name="Moszer I."/>
            <person name="Albertini A.M."/>
            <person name="Alloni G."/>
            <person name="Azevedo V."/>
            <person name="Bertero M.G."/>
            <person name="Bessieres P."/>
            <person name="Bolotin A."/>
            <person name="Borchert S."/>
            <person name="Borriss R."/>
            <person name="Boursier L."/>
            <person name="Brans A."/>
            <person name="Braun M."/>
            <person name="Brignell S.C."/>
            <person name="Bron S."/>
            <person name="Brouillet S."/>
            <person name="Bruschi C.V."/>
            <person name="Caldwell B."/>
            <person name="Capuano V."/>
            <person name="Carter N.M."/>
            <person name="Choi S.-K."/>
            <person name="Codani J.-J."/>
            <person name="Connerton I.F."/>
            <person name="Cummings N.J."/>
            <person name="Daniel R.A."/>
            <person name="Denizot F."/>
            <person name="Devine K.M."/>
            <person name="Duesterhoeft A."/>
            <person name="Ehrlich S.D."/>
            <person name="Emmerson P.T."/>
            <person name="Entian K.-D."/>
            <person name="Errington J."/>
            <person name="Fabret C."/>
            <person name="Ferrari E."/>
            <person name="Foulger D."/>
            <person name="Fritz C."/>
            <person name="Fujita M."/>
            <person name="Fujita Y."/>
            <person name="Fuma S."/>
            <person name="Galizzi A."/>
            <person name="Galleron N."/>
            <person name="Ghim S.-Y."/>
            <person name="Glaser P."/>
            <person name="Goffeau A."/>
            <person name="Golightly E.J."/>
            <person name="Grandi G."/>
            <person name="Guiseppi G."/>
            <person name="Guy B.J."/>
            <person name="Haga K."/>
            <person name="Haiech J."/>
            <person name="Harwood C.R."/>
            <person name="Henaut A."/>
            <person name="Hilbert H."/>
            <person name="Holsappel S."/>
            <person name="Hosono S."/>
            <person name="Hullo M.-F."/>
            <person name="Itaya M."/>
            <person name="Jones L.-M."/>
            <person name="Joris B."/>
            <person name="Karamata D."/>
            <person name="Kasahara Y."/>
            <person name="Klaerr-Blanchard M."/>
            <person name="Klein C."/>
            <person name="Kobayashi Y."/>
            <person name="Koetter P."/>
            <person name="Koningstein G."/>
            <person name="Krogh S."/>
            <person name="Kumano M."/>
            <person name="Kurita K."/>
            <person name="Lapidus A."/>
            <person name="Lardinois S."/>
            <person name="Lauber J."/>
            <person name="Lazarevic V."/>
            <person name="Lee S.-M."/>
            <person name="Levine A."/>
            <person name="Liu H."/>
            <person name="Masuda S."/>
            <person name="Mauel C."/>
            <person name="Medigue C."/>
            <person name="Medina N."/>
            <person name="Mellado R.P."/>
            <person name="Mizuno M."/>
            <person name="Moestl D."/>
            <person name="Nakai S."/>
            <person name="Noback M."/>
            <person name="Noone D."/>
            <person name="O'Reilly M."/>
            <person name="Ogawa K."/>
            <person name="Ogiwara A."/>
            <person name="Oudega B."/>
            <person name="Park S.-H."/>
            <person name="Parro V."/>
            <person name="Pohl T.M."/>
            <person name="Portetelle D."/>
            <person name="Porwollik S."/>
            <person name="Prescott A.M."/>
            <person name="Presecan E."/>
            <person name="Pujic P."/>
            <person name="Purnelle B."/>
            <person name="Rapoport G."/>
            <person name="Rey M."/>
            <person name="Reynolds S."/>
            <person name="Rieger M."/>
            <person name="Rivolta C."/>
            <person name="Rocha E."/>
            <person name="Roche B."/>
            <person name="Rose M."/>
            <person name="Sadaie Y."/>
            <person name="Sato T."/>
            <person name="Scanlan E."/>
            <person name="Schleich S."/>
            <person name="Schroeter R."/>
            <person name="Scoffone F."/>
            <person name="Sekiguchi J."/>
            <person name="Sekowska A."/>
            <person name="Seror S.J."/>
            <person name="Serror P."/>
            <person name="Shin B.-S."/>
            <person name="Soldo B."/>
            <person name="Sorokin A."/>
            <person name="Tacconi E."/>
            <person name="Takagi T."/>
            <person name="Takahashi H."/>
            <person name="Takemaru K."/>
            <person name="Takeuchi M."/>
            <person name="Tamakoshi A."/>
            <person name="Tanaka T."/>
            <person name="Terpstra P."/>
            <person name="Tognoni A."/>
            <person name="Tosato V."/>
            <person name="Uchiyama S."/>
            <person name="Vandenbol M."/>
            <person name="Vannier F."/>
            <person name="Vassarotti A."/>
            <person name="Viari A."/>
            <person name="Wambutt R."/>
            <person name="Wedler E."/>
            <person name="Wedler H."/>
            <person name="Weitzenegger T."/>
            <person name="Winters P."/>
            <person name="Wipat A."/>
            <person name="Yamamoto H."/>
            <person name="Yamane K."/>
            <person name="Yasumoto K."/>
            <person name="Yata K."/>
            <person name="Yoshida K."/>
            <person name="Yoshikawa H.-F."/>
            <person name="Zumstein E."/>
            <person name="Yoshikawa H."/>
            <person name="Danchin A."/>
        </authorList>
    </citation>
    <scope>NUCLEOTIDE SEQUENCE [LARGE SCALE GENOMIC DNA]</scope>
    <source>
        <strain>168</strain>
    </source>
</reference>
<accession>P42972</accession>
<comment type="similarity">
    <text evidence="2">Belongs to the aldo/keto reductase family. Aldo/keto reductase 2 subfamily.</text>
</comment>
<protein>
    <recommendedName>
        <fullName>Uncharacterized oxidoreductase YcsN</fullName>
        <ecNumber>1.-.-.-</ecNumber>
    </recommendedName>
</protein>